<accession>Q1G3M3</accession>
<accession>Q9LJL1</accession>
<feature type="chain" id="PRO_0000375144" description="B3 domain-containing protein At3g19184">
    <location>
        <begin position="1"/>
        <end position="277"/>
    </location>
</feature>
<feature type="DNA-binding region" description="TF-B3" evidence="1">
    <location>
        <begin position="130"/>
        <end position="221"/>
    </location>
</feature>
<feature type="region of interest" description="Disordered" evidence="2">
    <location>
        <begin position="33"/>
        <end position="94"/>
    </location>
</feature>
<feature type="region of interest" description="Disordered" evidence="2">
    <location>
        <begin position="224"/>
        <end position="277"/>
    </location>
</feature>
<feature type="compositionally biased region" description="Acidic residues" evidence="2">
    <location>
        <begin position="224"/>
        <end position="250"/>
    </location>
</feature>
<feature type="compositionally biased region" description="Basic and acidic residues" evidence="2">
    <location>
        <begin position="251"/>
        <end position="264"/>
    </location>
</feature>
<feature type="compositionally biased region" description="Basic residues" evidence="2">
    <location>
        <begin position="268"/>
        <end position="277"/>
    </location>
</feature>
<evidence type="ECO:0000255" key="1">
    <source>
        <dbReference type="PROSITE-ProRule" id="PRU00326"/>
    </source>
</evidence>
<evidence type="ECO:0000256" key="2">
    <source>
        <dbReference type="SAM" id="MobiDB-lite"/>
    </source>
</evidence>
<evidence type="ECO:0000305" key="3"/>
<protein>
    <recommendedName>
        <fullName>B3 domain-containing protein At3g19184</fullName>
    </recommendedName>
</protein>
<proteinExistence type="evidence at transcript level"/>
<gene>
    <name type="ordered locus">At3g19184</name>
    <name type="ORF">MVI11</name>
</gene>
<comment type="subcellular location">
    <subcellularLocation>
        <location evidence="1">Nucleus</location>
    </subcellularLocation>
</comment>
<comment type="sequence caution" evidence="3">
    <conflict type="erroneous gene model prediction">
        <sequence resource="EMBL-CDS" id="BAB02959"/>
    </conflict>
</comment>
<reference key="1">
    <citation type="journal article" date="2000" name="DNA Res.">
        <title>Structural analysis of Arabidopsis thaliana chromosome 3. II. Sequence features of the 4,251,695 bp regions covered by 90 P1, TAC and BAC clones.</title>
        <authorList>
            <person name="Kaneko T."/>
            <person name="Katoh T."/>
            <person name="Sato S."/>
            <person name="Nakamura Y."/>
            <person name="Asamizu E."/>
            <person name="Tabata S."/>
        </authorList>
    </citation>
    <scope>NUCLEOTIDE SEQUENCE [LARGE SCALE GENOMIC DNA]</scope>
    <source>
        <strain>cv. Columbia</strain>
    </source>
</reference>
<reference key="2">
    <citation type="journal article" date="2017" name="Plant J.">
        <title>Araport11: a complete reannotation of the Arabidopsis thaliana reference genome.</title>
        <authorList>
            <person name="Cheng C.Y."/>
            <person name="Krishnakumar V."/>
            <person name="Chan A.P."/>
            <person name="Thibaud-Nissen F."/>
            <person name="Schobel S."/>
            <person name="Town C.D."/>
        </authorList>
    </citation>
    <scope>GENOME REANNOTATION</scope>
    <source>
        <strain>cv. Columbia</strain>
    </source>
</reference>
<reference key="3">
    <citation type="journal article" date="2006" name="Plant Biotechnol. J.">
        <title>Simultaneous high-throughput recombinational cloning of open reading frames in closed and open configurations.</title>
        <authorList>
            <person name="Underwood B.A."/>
            <person name="Vanderhaeghen R."/>
            <person name="Whitford R."/>
            <person name="Town C.D."/>
            <person name="Hilson P."/>
        </authorList>
    </citation>
    <scope>NUCLEOTIDE SEQUENCE [LARGE SCALE MRNA]</scope>
    <source>
        <strain>cv. Columbia</strain>
    </source>
</reference>
<reference key="4">
    <citation type="submission" date="2009-03" db="EMBL/GenBank/DDBJ databases">
        <title>ORF cloning and analysis of Arabidopsis transcription factor genes.</title>
        <authorList>
            <person name="Fujita M."/>
            <person name="Mizukado S."/>
            <person name="Seki M."/>
            <person name="Shinozaki K."/>
            <person name="Mitsuda N."/>
            <person name="Takiguchi Y."/>
            <person name="Takagi M."/>
        </authorList>
    </citation>
    <scope>NUCLEOTIDE SEQUENCE [LARGE SCALE MRNA]</scope>
</reference>
<reference key="5">
    <citation type="journal article" date="2008" name="Trends Plant Sci.">
        <title>The plant B3 superfamily.</title>
        <authorList>
            <person name="Swaminathan K."/>
            <person name="Peterson K."/>
            <person name="Jack T."/>
        </authorList>
    </citation>
    <scope>GENE FAMILY</scope>
</reference>
<organism>
    <name type="scientific">Arabidopsis thaliana</name>
    <name type="common">Mouse-ear cress</name>
    <dbReference type="NCBI Taxonomy" id="3702"/>
    <lineage>
        <taxon>Eukaryota</taxon>
        <taxon>Viridiplantae</taxon>
        <taxon>Streptophyta</taxon>
        <taxon>Embryophyta</taxon>
        <taxon>Tracheophyta</taxon>
        <taxon>Spermatophyta</taxon>
        <taxon>Magnoliopsida</taxon>
        <taxon>eudicotyledons</taxon>
        <taxon>Gunneridae</taxon>
        <taxon>Pentapetalae</taxon>
        <taxon>rosids</taxon>
        <taxon>malvids</taxon>
        <taxon>Brassicales</taxon>
        <taxon>Brassicaceae</taxon>
        <taxon>Camelineae</taxon>
        <taxon>Arabidopsis</taxon>
    </lineage>
</organism>
<dbReference type="EMBL" id="AP000419">
    <property type="protein sequence ID" value="BAB02959.1"/>
    <property type="status" value="ALT_SEQ"/>
    <property type="molecule type" value="Genomic_DNA"/>
</dbReference>
<dbReference type="EMBL" id="CP002686">
    <property type="protein sequence ID" value="AEE76205.1"/>
    <property type="molecule type" value="Genomic_DNA"/>
</dbReference>
<dbReference type="EMBL" id="DQ487561">
    <property type="protein sequence ID" value="ABF59230.1"/>
    <property type="molecule type" value="mRNA"/>
</dbReference>
<dbReference type="EMBL" id="AB493621">
    <property type="protein sequence ID" value="BAH30459.1"/>
    <property type="molecule type" value="mRNA"/>
</dbReference>
<dbReference type="RefSeq" id="NP_001030726.2">
    <property type="nucleotide sequence ID" value="NM_001035649.4"/>
</dbReference>
<dbReference type="SMR" id="Q1G3M3"/>
<dbReference type="BioGRID" id="529114">
    <property type="interactions" value="4"/>
</dbReference>
<dbReference type="FunCoup" id="Q1G3M3">
    <property type="interactions" value="114"/>
</dbReference>
<dbReference type="IntAct" id="Q1G3M3">
    <property type="interactions" value="4"/>
</dbReference>
<dbReference type="STRING" id="3702.Q1G3M3"/>
<dbReference type="PaxDb" id="3702-AT3G19184.1"/>
<dbReference type="ProteomicsDB" id="242885"/>
<dbReference type="EnsemblPlants" id="AT3G19184.1">
    <property type="protein sequence ID" value="AT3G19184.1"/>
    <property type="gene ID" value="AT3G19184"/>
</dbReference>
<dbReference type="GeneID" id="3768753"/>
<dbReference type="Gramene" id="AT3G19184.1">
    <property type="protein sequence ID" value="AT3G19184.1"/>
    <property type="gene ID" value="AT3G19184"/>
</dbReference>
<dbReference type="KEGG" id="ath:AT3G19184"/>
<dbReference type="Araport" id="AT3G19184"/>
<dbReference type="TAIR" id="AT3G19184"/>
<dbReference type="eggNOG" id="ENOG502QW3X">
    <property type="taxonomic scope" value="Eukaryota"/>
</dbReference>
<dbReference type="HOGENOM" id="CLU_058918_1_0_1"/>
<dbReference type="InParanoid" id="Q1G3M3"/>
<dbReference type="OMA" id="LPKHDEY"/>
<dbReference type="PhylomeDB" id="Q1G3M3"/>
<dbReference type="PRO" id="PR:Q1G3M3"/>
<dbReference type="Proteomes" id="UP000006548">
    <property type="component" value="Chromosome 3"/>
</dbReference>
<dbReference type="ExpressionAtlas" id="Q1G3M3">
    <property type="expression patterns" value="baseline and differential"/>
</dbReference>
<dbReference type="GO" id="GO:0005634">
    <property type="term" value="C:nucleus"/>
    <property type="evidence" value="ECO:0007669"/>
    <property type="project" value="UniProtKB-SubCell"/>
</dbReference>
<dbReference type="GO" id="GO:0003677">
    <property type="term" value="F:DNA binding"/>
    <property type="evidence" value="ECO:0007669"/>
    <property type="project" value="UniProtKB-KW"/>
</dbReference>
<dbReference type="CDD" id="cd10017">
    <property type="entry name" value="B3_DNA"/>
    <property type="match status" value="1"/>
</dbReference>
<dbReference type="Gene3D" id="2.40.330.10">
    <property type="entry name" value="DNA-binding pseudobarrel domain"/>
    <property type="match status" value="1"/>
</dbReference>
<dbReference type="InterPro" id="IPR003340">
    <property type="entry name" value="B3_DNA-bd"/>
</dbReference>
<dbReference type="InterPro" id="IPR015300">
    <property type="entry name" value="DNA-bd_pseudobarrel_sf"/>
</dbReference>
<dbReference type="InterPro" id="IPR044837">
    <property type="entry name" value="REM16-like"/>
</dbReference>
<dbReference type="PANTHER" id="PTHR31391:SF99">
    <property type="entry name" value="B3 DOMAIN-CONTAINING PROTEIN OS06G0194400"/>
    <property type="match status" value="1"/>
</dbReference>
<dbReference type="PANTHER" id="PTHR31391">
    <property type="entry name" value="B3 DOMAIN-CONTAINING PROTEIN OS11G0197600-RELATED"/>
    <property type="match status" value="1"/>
</dbReference>
<dbReference type="Pfam" id="PF02362">
    <property type="entry name" value="B3"/>
    <property type="match status" value="1"/>
</dbReference>
<dbReference type="SMART" id="SM01019">
    <property type="entry name" value="B3"/>
    <property type="match status" value="1"/>
</dbReference>
<dbReference type="SUPFAM" id="SSF101936">
    <property type="entry name" value="DNA-binding pseudobarrel domain"/>
    <property type="match status" value="1"/>
</dbReference>
<dbReference type="PROSITE" id="PS50863">
    <property type="entry name" value="B3"/>
    <property type="match status" value="1"/>
</dbReference>
<sequence length="277" mass="31647">MVESELSYEQIRLNRVEENKKRMGELNLNKLAQSLRVSSSSSSSSKPSPAKPRTMRIPVDFSEVRRSSRAKGPPPSYKEFGLEPLERRPRRSSRRRDLLNRVYASDDARMYAFDRAEKLQSSLDSEYASFTKPMLQSHVTGGFWLGLPLPFCKAHMPKRDVIMTLVDEEEEESQAKYLAQKNGLSGGWRGFAIDHQLVDGDAVVFHLIARTTFKVYIIRVNDDANNDSDGNEVNDDDSDGNEEDRDNDNESNEKQKETVSEGRQLRSSGKRKRRGRK</sequence>
<keyword id="KW-0238">DNA-binding</keyword>
<keyword id="KW-0539">Nucleus</keyword>
<keyword id="KW-1185">Reference proteome</keyword>
<keyword id="KW-0804">Transcription</keyword>
<keyword id="KW-0805">Transcription regulation</keyword>
<name>Y3918_ARATH</name>